<keyword id="KW-0067">ATP-binding</keyword>
<keyword id="KW-0963">Cytoplasm</keyword>
<keyword id="KW-0418">Kinase</keyword>
<keyword id="KW-0496">Mitochondrion</keyword>
<keyword id="KW-0547">Nucleotide-binding</keyword>
<keyword id="KW-0808">Transferase</keyword>
<feature type="chain" id="PRO_0000365660" description="Adenylate kinase">
    <location>
        <begin position="1"/>
        <end position="257"/>
    </location>
</feature>
<feature type="region of interest" description="NMP" evidence="1">
    <location>
        <begin position="72"/>
        <end position="101"/>
    </location>
</feature>
<feature type="region of interest" description="LID" evidence="1">
    <location>
        <begin position="169"/>
        <end position="206"/>
    </location>
</feature>
<feature type="binding site" evidence="1">
    <location>
        <begin position="52"/>
        <end position="57"/>
    </location>
    <ligand>
        <name>ATP</name>
        <dbReference type="ChEBI" id="CHEBI:30616"/>
    </ligand>
</feature>
<feature type="binding site" evidence="1">
    <location>
        <position position="73"/>
    </location>
    <ligand>
        <name>AMP</name>
        <dbReference type="ChEBI" id="CHEBI:456215"/>
    </ligand>
</feature>
<feature type="binding site" evidence="1">
    <location>
        <position position="78"/>
    </location>
    <ligand>
        <name>AMP</name>
        <dbReference type="ChEBI" id="CHEBI:456215"/>
    </ligand>
</feature>
<feature type="binding site" evidence="1">
    <location>
        <begin position="99"/>
        <end position="101"/>
    </location>
    <ligand>
        <name>AMP</name>
        <dbReference type="ChEBI" id="CHEBI:456215"/>
    </ligand>
</feature>
<feature type="binding site" evidence="1">
    <location>
        <begin position="128"/>
        <end position="131"/>
    </location>
    <ligand>
        <name>AMP</name>
        <dbReference type="ChEBI" id="CHEBI:456215"/>
    </ligand>
</feature>
<feature type="binding site" evidence="1">
    <location>
        <position position="135"/>
    </location>
    <ligand>
        <name>AMP</name>
        <dbReference type="ChEBI" id="CHEBI:456215"/>
    </ligand>
</feature>
<feature type="binding site" evidence="1">
    <location>
        <position position="170"/>
    </location>
    <ligand>
        <name>ATP</name>
        <dbReference type="ChEBI" id="CHEBI:30616"/>
    </ligand>
</feature>
<feature type="binding site" evidence="1">
    <location>
        <begin position="179"/>
        <end position="180"/>
    </location>
    <ligand>
        <name>ATP</name>
        <dbReference type="ChEBI" id="CHEBI:30616"/>
    </ligand>
</feature>
<feature type="binding site" evidence="1">
    <location>
        <position position="203"/>
    </location>
    <ligand>
        <name>AMP</name>
        <dbReference type="ChEBI" id="CHEBI:456215"/>
    </ligand>
</feature>
<feature type="binding site" evidence="1">
    <location>
        <position position="214"/>
    </location>
    <ligand>
        <name>AMP</name>
        <dbReference type="ChEBI" id="CHEBI:456215"/>
    </ligand>
</feature>
<feature type="binding site" evidence="1">
    <location>
        <position position="242"/>
    </location>
    <ligand>
        <name>ATP</name>
        <dbReference type="ChEBI" id="CHEBI:30616"/>
    </ligand>
</feature>
<accession>B0XPW9</accession>
<sequence length="257" mass="28703">MAPITEEVVHGLKDMIEKLENRVQELEARLGGESKPKSIAEQMRIVLMGPPGAGKGTQAPRLKEKYCVCHLATGDMLRSQVAKKTELGKEAKKIMDQGGLVSDEIMVNMIKNELDTNSECKNGFILDGFPRTVAQAERLDDMLEARNQKLQHAIELQIDDALLVARITGRLVHPASGRSYHKIFNPPKNDMKDDVTGEPLIQRSDDNAETLKKRLSTYHAQTAPVVEYYKKTGIWRGIDASQEPGQVWKSLLGVFQK</sequence>
<evidence type="ECO:0000255" key="1">
    <source>
        <dbReference type="HAMAP-Rule" id="MF_03168"/>
    </source>
</evidence>
<organism>
    <name type="scientific">Aspergillus fumigatus (strain CBS 144.89 / FGSC A1163 / CEA10)</name>
    <name type="common">Neosartorya fumigata</name>
    <dbReference type="NCBI Taxonomy" id="451804"/>
    <lineage>
        <taxon>Eukaryota</taxon>
        <taxon>Fungi</taxon>
        <taxon>Dikarya</taxon>
        <taxon>Ascomycota</taxon>
        <taxon>Pezizomycotina</taxon>
        <taxon>Eurotiomycetes</taxon>
        <taxon>Eurotiomycetidae</taxon>
        <taxon>Eurotiales</taxon>
        <taxon>Aspergillaceae</taxon>
        <taxon>Aspergillus</taxon>
        <taxon>Aspergillus subgen. Fumigati</taxon>
    </lineage>
</organism>
<comment type="function">
    <text evidence="1">Catalyzes the reversible transfer of the terminal phosphate group between ATP and AMP. Plays an important role in cellular energy homeostasis and in adenine nucleotide metabolism. Adenylate kinase activity is critical for regulation of the phosphate utilization and the AMP de novo biosynthesis pathways.</text>
</comment>
<comment type="catalytic activity">
    <reaction evidence="1">
        <text>AMP + ATP = 2 ADP</text>
        <dbReference type="Rhea" id="RHEA:12973"/>
        <dbReference type="ChEBI" id="CHEBI:30616"/>
        <dbReference type="ChEBI" id="CHEBI:456215"/>
        <dbReference type="ChEBI" id="CHEBI:456216"/>
        <dbReference type="EC" id="2.7.4.3"/>
    </reaction>
</comment>
<comment type="subunit">
    <text evidence="1">Monomer.</text>
</comment>
<comment type="subcellular location">
    <subcellularLocation>
        <location evidence="1">Cytoplasm</location>
        <location evidence="1">Cytosol</location>
    </subcellularLocation>
    <subcellularLocation>
        <location evidence="1">Mitochondrion intermembrane space</location>
    </subcellularLocation>
    <text evidence="1">Predominantly mitochondrial.</text>
</comment>
<comment type="domain">
    <text evidence="1">Consists of three domains, a large central CORE domain and two small peripheral domains, NMPbind and LID, which undergo movements during catalysis. The LID domain closes over the site of phosphoryl transfer upon ATP binding. Assembling and dissambling the active center during each catalytic cycle provides an effective means to prevent ATP hydrolysis.</text>
</comment>
<comment type="similarity">
    <text evidence="1">Belongs to the adenylate kinase family. AK2 subfamily.</text>
</comment>
<name>KAD2_ASPFC</name>
<gene>
    <name type="primary">adk1</name>
    <name type="ORF">AFUB_007850</name>
</gene>
<dbReference type="EC" id="2.7.4.3" evidence="1"/>
<dbReference type="EMBL" id="DS499594">
    <property type="protein sequence ID" value="EDP56083.1"/>
    <property type="molecule type" value="Genomic_DNA"/>
</dbReference>
<dbReference type="SMR" id="B0XPW9"/>
<dbReference type="EnsemblFungi" id="EDP56083">
    <property type="protein sequence ID" value="EDP56083"/>
    <property type="gene ID" value="AFUB_007850"/>
</dbReference>
<dbReference type="VEuPathDB" id="FungiDB:AFUB_007850"/>
<dbReference type="HOGENOM" id="CLU_032354_1_0_1"/>
<dbReference type="OrthoDB" id="6866at5052"/>
<dbReference type="PhylomeDB" id="B0XPW9"/>
<dbReference type="Proteomes" id="UP000001699">
    <property type="component" value="Unassembled WGS sequence"/>
</dbReference>
<dbReference type="GO" id="GO:0005829">
    <property type="term" value="C:cytosol"/>
    <property type="evidence" value="ECO:0007669"/>
    <property type="project" value="UniProtKB-SubCell"/>
</dbReference>
<dbReference type="GO" id="GO:0005758">
    <property type="term" value="C:mitochondrial intermembrane space"/>
    <property type="evidence" value="ECO:0007669"/>
    <property type="project" value="UniProtKB-SubCell"/>
</dbReference>
<dbReference type="GO" id="GO:0004017">
    <property type="term" value="F:adenylate kinase activity"/>
    <property type="evidence" value="ECO:0007669"/>
    <property type="project" value="UniProtKB-UniRule"/>
</dbReference>
<dbReference type="GO" id="GO:0016208">
    <property type="term" value="F:AMP binding"/>
    <property type="evidence" value="ECO:0007669"/>
    <property type="project" value="EnsemblFungi"/>
</dbReference>
<dbReference type="GO" id="GO:0005524">
    <property type="term" value="F:ATP binding"/>
    <property type="evidence" value="ECO:0007669"/>
    <property type="project" value="UniProtKB-KW"/>
</dbReference>
<dbReference type="GO" id="GO:0003688">
    <property type="term" value="F:DNA replication origin binding"/>
    <property type="evidence" value="ECO:0007669"/>
    <property type="project" value="EnsemblFungi"/>
</dbReference>
<dbReference type="GO" id="GO:0006172">
    <property type="term" value="P:ADP biosynthetic process"/>
    <property type="evidence" value="ECO:0007669"/>
    <property type="project" value="UniProtKB-UniRule"/>
</dbReference>
<dbReference type="GO" id="GO:0046033">
    <property type="term" value="P:AMP metabolic process"/>
    <property type="evidence" value="ECO:0007669"/>
    <property type="project" value="UniProtKB-UniRule"/>
</dbReference>
<dbReference type="GO" id="GO:0046034">
    <property type="term" value="P:ATP metabolic process"/>
    <property type="evidence" value="ECO:0007669"/>
    <property type="project" value="UniProtKB-UniRule"/>
</dbReference>
<dbReference type="GO" id="GO:0006270">
    <property type="term" value="P:DNA replication initiation"/>
    <property type="evidence" value="ECO:0007669"/>
    <property type="project" value="EnsemblFungi"/>
</dbReference>
<dbReference type="GO" id="GO:0036388">
    <property type="term" value="P:pre-replicative complex assembly"/>
    <property type="evidence" value="ECO:0007669"/>
    <property type="project" value="EnsemblFungi"/>
</dbReference>
<dbReference type="CDD" id="cd01428">
    <property type="entry name" value="ADK"/>
    <property type="match status" value="1"/>
</dbReference>
<dbReference type="FunFam" id="3.40.50.300:FF:000106">
    <property type="entry name" value="Adenylate kinase mitochondrial"/>
    <property type="match status" value="1"/>
</dbReference>
<dbReference type="Gene3D" id="3.40.50.300">
    <property type="entry name" value="P-loop containing nucleotide triphosphate hydrolases"/>
    <property type="match status" value="1"/>
</dbReference>
<dbReference type="HAMAP" id="MF_00235">
    <property type="entry name" value="Adenylate_kinase_Adk"/>
    <property type="match status" value="1"/>
</dbReference>
<dbReference type="HAMAP" id="MF_03168">
    <property type="entry name" value="Adenylate_kinase_AK2"/>
    <property type="match status" value="1"/>
</dbReference>
<dbReference type="InterPro" id="IPR006259">
    <property type="entry name" value="Adenyl_kin_sub"/>
</dbReference>
<dbReference type="InterPro" id="IPR000850">
    <property type="entry name" value="Adenylat/UMP-CMP_kin"/>
</dbReference>
<dbReference type="InterPro" id="IPR033690">
    <property type="entry name" value="Adenylat_kinase_CS"/>
</dbReference>
<dbReference type="InterPro" id="IPR007862">
    <property type="entry name" value="Adenylate_kinase_lid-dom"/>
</dbReference>
<dbReference type="InterPro" id="IPR028587">
    <property type="entry name" value="AK2"/>
</dbReference>
<dbReference type="InterPro" id="IPR027417">
    <property type="entry name" value="P-loop_NTPase"/>
</dbReference>
<dbReference type="NCBIfam" id="TIGR01351">
    <property type="entry name" value="adk"/>
    <property type="match status" value="1"/>
</dbReference>
<dbReference type="NCBIfam" id="NF001380">
    <property type="entry name" value="PRK00279.1-2"/>
    <property type="match status" value="1"/>
</dbReference>
<dbReference type="NCBIfam" id="NF001381">
    <property type="entry name" value="PRK00279.1-3"/>
    <property type="match status" value="1"/>
</dbReference>
<dbReference type="NCBIfam" id="NF011100">
    <property type="entry name" value="PRK14527.1"/>
    <property type="match status" value="1"/>
</dbReference>
<dbReference type="PANTHER" id="PTHR23359">
    <property type="entry name" value="NUCLEOTIDE KINASE"/>
    <property type="match status" value="1"/>
</dbReference>
<dbReference type="Pfam" id="PF00406">
    <property type="entry name" value="ADK"/>
    <property type="match status" value="1"/>
</dbReference>
<dbReference type="Pfam" id="PF05191">
    <property type="entry name" value="ADK_lid"/>
    <property type="match status" value="1"/>
</dbReference>
<dbReference type="PRINTS" id="PR00094">
    <property type="entry name" value="ADENYLTKNASE"/>
</dbReference>
<dbReference type="SUPFAM" id="SSF52540">
    <property type="entry name" value="P-loop containing nucleoside triphosphate hydrolases"/>
    <property type="match status" value="1"/>
</dbReference>
<dbReference type="PROSITE" id="PS00113">
    <property type="entry name" value="ADENYLATE_KINASE"/>
    <property type="match status" value="1"/>
</dbReference>
<protein>
    <recommendedName>
        <fullName evidence="1">Adenylate kinase</fullName>
        <ecNumber evidence="1">2.7.4.3</ecNumber>
    </recommendedName>
    <alternativeName>
        <fullName evidence="1">ATP-AMP transphosphorylase</fullName>
    </alternativeName>
    <alternativeName>
        <fullName evidence="1">ATP:AMP phosphotransferase</fullName>
    </alternativeName>
    <alternativeName>
        <fullName evidence="1">Adenylate kinase cytosolic and mitochondrial</fullName>
    </alternativeName>
    <alternativeName>
        <fullName evidence="1">Adenylate monophosphate kinase</fullName>
    </alternativeName>
</protein>
<reference key="1">
    <citation type="journal article" date="2008" name="PLoS Genet.">
        <title>Genomic islands in the pathogenic filamentous fungus Aspergillus fumigatus.</title>
        <authorList>
            <person name="Fedorova N.D."/>
            <person name="Khaldi N."/>
            <person name="Joardar V.S."/>
            <person name="Maiti R."/>
            <person name="Amedeo P."/>
            <person name="Anderson M.J."/>
            <person name="Crabtree J."/>
            <person name="Silva J.C."/>
            <person name="Badger J.H."/>
            <person name="Albarraq A."/>
            <person name="Angiuoli S."/>
            <person name="Bussey H."/>
            <person name="Bowyer P."/>
            <person name="Cotty P.J."/>
            <person name="Dyer P.S."/>
            <person name="Egan A."/>
            <person name="Galens K."/>
            <person name="Fraser-Liggett C.M."/>
            <person name="Haas B.J."/>
            <person name="Inman J.M."/>
            <person name="Kent R."/>
            <person name="Lemieux S."/>
            <person name="Malavazi I."/>
            <person name="Orvis J."/>
            <person name="Roemer T."/>
            <person name="Ronning C.M."/>
            <person name="Sundaram J.P."/>
            <person name="Sutton G."/>
            <person name="Turner G."/>
            <person name="Venter J.C."/>
            <person name="White O.R."/>
            <person name="Whitty B.R."/>
            <person name="Youngman P."/>
            <person name="Wolfe K.H."/>
            <person name="Goldman G.H."/>
            <person name="Wortman J.R."/>
            <person name="Jiang B."/>
            <person name="Denning D.W."/>
            <person name="Nierman W.C."/>
        </authorList>
    </citation>
    <scope>NUCLEOTIDE SEQUENCE [LARGE SCALE GENOMIC DNA]</scope>
    <source>
        <strain>CBS 144.89 / FGSC A1163 / CEA10</strain>
    </source>
</reference>
<proteinExistence type="inferred from homology"/>